<keyword id="KW-0104">Cadmium</keyword>
<keyword id="KW-0186">Copper</keyword>
<keyword id="KW-0479">Metal-binding</keyword>
<keyword id="KW-1185">Reference proteome</keyword>
<keyword id="KW-0862">Zinc</keyword>
<organism>
    <name type="scientific">Drosophila melanogaster</name>
    <name type="common">Fruit fly</name>
    <dbReference type="NCBI Taxonomy" id="7227"/>
    <lineage>
        <taxon>Eukaryota</taxon>
        <taxon>Metazoa</taxon>
        <taxon>Ecdysozoa</taxon>
        <taxon>Arthropoda</taxon>
        <taxon>Hexapoda</taxon>
        <taxon>Insecta</taxon>
        <taxon>Pterygota</taxon>
        <taxon>Neoptera</taxon>
        <taxon>Endopterygota</taxon>
        <taxon>Diptera</taxon>
        <taxon>Brachycera</taxon>
        <taxon>Muscomorpha</taxon>
        <taxon>Ephydroidea</taxon>
        <taxon>Drosophilidae</taxon>
        <taxon>Drosophila</taxon>
        <taxon>Sophophora</taxon>
    </lineage>
</organism>
<name>MT3_DROME</name>
<sequence>MVCKGCGTNCKCQDTKCGDNCACNQDCKCVCKNGPKDQCCKSK</sequence>
<proteinExistence type="inferred from homology"/>
<gene>
    <name type="primary">MtnC</name>
    <name type="ORF">CG5097</name>
</gene>
<reference key="1">
    <citation type="journal article" date="2000" name="Science">
        <title>The genome sequence of Drosophila melanogaster.</title>
        <authorList>
            <person name="Adams M.D."/>
            <person name="Celniker S.E."/>
            <person name="Holt R.A."/>
            <person name="Evans C.A."/>
            <person name="Gocayne J.D."/>
            <person name="Amanatides P.G."/>
            <person name="Scherer S.E."/>
            <person name="Li P.W."/>
            <person name="Hoskins R.A."/>
            <person name="Galle R.F."/>
            <person name="George R.A."/>
            <person name="Lewis S.E."/>
            <person name="Richards S."/>
            <person name="Ashburner M."/>
            <person name="Henderson S.N."/>
            <person name="Sutton G.G."/>
            <person name="Wortman J.R."/>
            <person name="Yandell M.D."/>
            <person name="Zhang Q."/>
            <person name="Chen L.X."/>
            <person name="Brandon R.C."/>
            <person name="Rogers Y.-H.C."/>
            <person name="Blazej R.G."/>
            <person name="Champe M."/>
            <person name="Pfeiffer B.D."/>
            <person name="Wan K.H."/>
            <person name="Doyle C."/>
            <person name="Baxter E.G."/>
            <person name="Helt G."/>
            <person name="Nelson C.R."/>
            <person name="Miklos G.L.G."/>
            <person name="Abril J.F."/>
            <person name="Agbayani A."/>
            <person name="An H.-J."/>
            <person name="Andrews-Pfannkoch C."/>
            <person name="Baldwin D."/>
            <person name="Ballew R.M."/>
            <person name="Basu A."/>
            <person name="Baxendale J."/>
            <person name="Bayraktaroglu L."/>
            <person name="Beasley E.M."/>
            <person name="Beeson K.Y."/>
            <person name="Benos P.V."/>
            <person name="Berman B.P."/>
            <person name="Bhandari D."/>
            <person name="Bolshakov S."/>
            <person name="Borkova D."/>
            <person name="Botchan M.R."/>
            <person name="Bouck J."/>
            <person name="Brokstein P."/>
            <person name="Brottier P."/>
            <person name="Burtis K.C."/>
            <person name="Busam D.A."/>
            <person name="Butler H."/>
            <person name="Cadieu E."/>
            <person name="Center A."/>
            <person name="Chandra I."/>
            <person name="Cherry J.M."/>
            <person name="Cawley S."/>
            <person name="Dahlke C."/>
            <person name="Davenport L.B."/>
            <person name="Davies P."/>
            <person name="de Pablos B."/>
            <person name="Delcher A."/>
            <person name="Deng Z."/>
            <person name="Mays A.D."/>
            <person name="Dew I."/>
            <person name="Dietz S.M."/>
            <person name="Dodson K."/>
            <person name="Doup L.E."/>
            <person name="Downes M."/>
            <person name="Dugan-Rocha S."/>
            <person name="Dunkov B.C."/>
            <person name="Dunn P."/>
            <person name="Durbin K.J."/>
            <person name="Evangelista C.C."/>
            <person name="Ferraz C."/>
            <person name="Ferriera S."/>
            <person name="Fleischmann W."/>
            <person name="Fosler C."/>
            <person name="Gabrielian A.E."/>
            <person name="Garg N.S."/>
            <person name="Gelbart W.M."/>
            <person name="Glasser K."/>
            <person name="Glodek A."/>
            <person name="Gong F."/>
            <person name="Gorrell J.H."/>
            <person name="Gu Z."/>
            <person name="Guan P."/>
            <person name="Harris M."/>
            <person name="Harris N.L."/>
            <person name="Harvey D.A."/>
            <person name="Heiman T.J."/>
            <person name="Hernandez J.R."/>
            <person name="Houck J."/>
            <person name="Hostin D."/>
            <person name="Houston K.A."/>
            <person name="Howland T.J."/>
            <person name="Wei M.-H."/>
            <person name="Ibegwam C."/>
            <person name="Jalali M."/>
            <person name="Kalush F."/>
            <person name="Karpen G.H."/>
            <person name="Ke Z."/>
            <person name="Kennison J.A."/>
            <person name="Ketchum K.A."/>
            <person name="Kimmel B.E."/>
            <person name="Kodira C.D."/>
            <person name="Kraft C.L."/>
            <person name="Kravitz S."/>
            <person name="Kulp D."/>
            <person name="Lai Z."/>
            <person name="Lasko P."/>
            <person name="Lei Y."/>
            <person name="Levitsky A.A."/>
            <person name="Li J.H."/>
            <person name="Li Z."/>
            <person name="Liang Y."/>
            <person name="Lin X."/>
            <person name="Liu X."/>
            <person name="Mattei B."/>
            <person name="McIntosh T.C."/>
            <person name="McLeod M.P."/>
            <person name="McPherson D."/>
            <person name="Merkulov G."/>
            <person name="Milshina N.V."/>
            <person name="Mobarry C."/>
            <person name="Morris J."/>
            <person name="Moshrefi A."/>
            <person name="Mount S.M."/>
            <person name="Moy M."/>
            <person name="Murphy B."/>
            <person name="Murphy L."/>
            <person name="Muzny D.M."/>
            <person name="Nelson D.L."/>
            <person name="Nelson D.R."/>
            <person name="Nelson K.A."/>
            <person name="Nixon K."/>
            <person name="Nusskern D.R."/>
            <person name="Pacleb J.M."/>
            <person name="Palazzolo M."/>
            <person name="Pittman G.S."/>
            <person name="Pan S."/>
            <person name="Pollard J."/>
            <person name="Puri V."/>
            <person name="Reese M.G."/>
            <person name="Reinert K."/>
            <person name="Remington K."/>
            <person name="Saunders R.D.C."/>
            <person name="Scheeler F."/>
            <person name="Shen H."/>
            <person name="Shue B.C."/>
            <person name="Siden-Kiamos I."/>
            <person name="Simpson M."/>
            <person name="Skupski M.P."/>
            <person name="Smith T.J."/>
            <person name="Spier E."/>
            <person name="Spradling A.C."/>
            <person name="Stapleton M."/>
            <person name="Strong R."/>
            <person name="Sun E."/>
            <person name="Svirskas R."/>
            <person name="Tector C."/>
            <person name="Turner R."/>
            <person name="Venter E."/>
            <person name="Wang A.H."/>
            <person name="Wang X."/>
            <person name="Wang Z.-Y."/>
            <person name="Wassarman D.A."/>
            <person name="Weinstock G.M."/>
            <person name="Weissenbach J."/>
            <person name="Williams S.M."/>
            <person name="Woodage T."/>
            <person name="Worley K.C."/>
            <person name="Wu D."/>
            <person name="Yang S."/>
            <person name="Yao Q.A."/>
            <person name="Ye J."/>
            <person name="Yeh R.-F."/>
            <person name="Zaveri J.S."/>
            <person name="Zhan M."/>
            <person name="Zhang G."/>
            <person name="Zhao Q."/>
            <person name="Zheng L."/>
            <person name="Zheng X.H."/>
            <person name="Zhong F.N."/>
            <person name="Zhong W."/>
            <person name="Zhou X."/>
            <person name="Zhu S.C."/>
            <person name="Zhu X."/>
            <person name="Smith H.O."/>
            <person name="Gibbs R.A."/>
            <person name="Myers E.W."/>
            <person name="Rubin G.M."/>
            <person name="Venter J.C."/>
        </authorList>
    </citation>
    <scope>NUCLEOTIDE SEQUENCE [LARGE SCALE GENOMIC DNA]</scope>
    <source>
        <strain>Berkeley</strain>
    </source>
</reference>
<reference key="2">
    <citation type="journal article" date="2002" name="Genome Biol.">
        <title>Annotation of the Drosophila melanogaster euchromatic genome: a systematic review.</title>
        <authorList>
            <person name="Misra S."/>
            <person name="Crosby M.A."/>
            <person name="Mungall C.J."/>
            <person name="Matthews B.B."/>
            <person name="Campbell K.S."/>
            <person name="Hradecky P."/>
            <person name="Huang Y."/>
            <person name="Kaminker J.S."/>
            <person name="Millburn G.H."/>
            <person name="Prochnik S.E."/>
            <person name="Smith C.D."/>
            <person name="Tupy J.L."/>
            <person name="Whitfield E.J."/>
            <person name="Bayraktaroglu L."/>
            <person name="Berman B.P."/>
            <person name="Bettencourt B.R."/>
            <person name="Celniker S.E."/>
            <person name="de Grey A.D.N.J."/>
            <person name="Drysdale R.A."/>
            <person name="Harris N.L."/>
            <person name="Richter J."/>
            <person name="Russo S."/>
            <person name="Schroeder A.J."/>
            <person name="Shu S.Q."/>
            <person name="Stapleton M."/>
            <person name="Yamada C."/>
            <person name="Ashburner M."/>
            <person name="Gelbart W.M."/>
            <person name="Rubin G.M."/>
            <person name="Lewis S.E."/>
        </authorList>
    </citation>
    <scope>GENOME REANNOTATION</scope>
    <source>
        <strain>Berkeley</strain>
    </source>
</reference>
<reference key="3">
    <citation type="journal article" date="2003" name="EMBO J.">
        <title>Knockout of 'metal-responsive transcription factor' MTF-1 in Drosophila by homologous recombination reveals its central role in heavy metal homeostasis.</title>
        <authorList>
            <person name="Egli D."/>
            <person name="Selvaraj A."/>
            <person name="Yepiskoposyan H."/>
            <person name="Zhang B."/>
            <person name="Hafen E."/>
            <person name="Georgiev O."/>
            <person name="Schaffner W."/>
        </authorList>
    </citation>
    <scope>IDENTIFICATION</scope>
</reference>
<protein>
    <recommendedName>
        <fullName>Metallothionein-3</fullName>
        <shortName>MT-3</shortName>
    </recommendedName>
    <alternativeName>
        <fullName>Metallothionein C</fullName>
    </alternativeName>
</protein>
<comment type="function">
    <text evidence="1">This protein binds cations of several transition elements. Thought to be involved in metal ion homeostasis (By similarity).</text>
</comment>
<comment type="domain">
    <text>All cysteine residues are arranged in C-X-C groups. These are thought to be the metal-binding sites in other metallothioneins.</text>
</comment>
<comment type="similarity">
    <text evidence="2">Belongs to the metallothionein superfamily. Type 5 family.</text>
</comment>
<evidence type="ECO:0000250" key="1"/>
<evidence type="ECO:0000305" key="2"/>
<dbReference type="EMBL" id="AE014297">
    <property type="protein sequence ID" value="AAF55758.1"/>
    <property type="molecule type" value="Genomic_DNA"/>
</dbReference>
<dbReference type="RefSeq" id="NP_650882.1">
    <property type="nucleotide sequence ID" value="NM_142625.2"/>
</dbReference>
<dbReference type="STRING" id="7227.FBpp0083292"/>
<dbReference type="PaxDb" id="7227-FBpp0083292"/>
<dbReference type="DNASU" id="42416"/>
<dbReference type="EnsemblMetazoa" id="FBtr0083884">
    <property type="protein sequence ID" value="FBpp0083292"/>
    <property type="gene ID" value="FBgn0038790"/>
</dbReference>
<dbReference type="GeneID" id="42416"/>
<dbReference type="KEGG" id="dme:Dmel_CG5097"/>
<dbReference type="AGR" id="FB:FBgn0038790"/>
<dbReference type="CTD" id="42416"/>
<dbReference type="FlyBase" id="FBgn0038790">
    <property type="gene designation" value="MtnC"/>
</dbReference>
<dbReference type="VEuPathDB" id="VectorBase:FBgn0038790"/>
<dbReference type="eggNOG" id="KOG4738">
    <property type="taxonomic scope" value="Eukaryota"/>
</dbReference>
<dbReference type="HOGENOM" id="CLU_217426_0_0_1"/>
<dbReference type="InParanoid" id="Q9VDN2"/>
<dbReference type="OrthoDB" id="7802073at2759"/>
<dbReference type="PhylomeDB" id="Q9VDN2"/>
<dbReference type="BioGRID-ORCS" id="42416">
    <property type="hits" value="0 hits in 1 CRISPR screen"/>
</dbReference>
<dbReference type="GenomeRNAi" id="42416"/>
<dbReference type="PRO" id="PR:Q9VDN2"/>
<dbReference type="Proteomes" id="UP000000803">
    <property type="component" value="Chromosome 3R"/>
</dbReference>
<dbReference type="Bgee" id="FBgn0038790">
    <property type="expression patterns" value="Expressed in adult posterior midgut class II enteroendocrine cell in adult midgut (Drosophila) and 36 other cell types or tissues"/>
</dbReference>
<dbReference type="ExpressionAtlas" id="Q9VDN2">
    <property type="expression patterns" value="baseline"/>
</dbReference>
<dbReference type="GO" id="GO:0046872">
    <property type="term" value="F:metal ion binding"/>
    <property type="evidence" value="ECO:0000314"/>
    <property type="project" value="FlyBase"/>
</dbReference>
<dbReference type="GO" id="GO:1990748">
    <property type="term" value="P:cellular detoxification"/>
    <property type="evidence" value="ECO:0000250"/>
    <property type="project" value="UniProtKB"/>
</dbReference>
<dbReference type="GO" id="GO:0140961">
    <property type="term" value="P:cellular detoxification of metal ion"/>
    <property type="evidence" value="ECO:0000315"/>
    <property type="project" value="FlyBase"/>
</dbReference>
<dbReference type="GO" id="GO:0010038">
    <property type="term" value="P:response to metal ion"/>
    <property type="evidence" value="ECO:0000314"/>
    <property type="project" value="FlyBase"/>
</dbReference>
<dbReference type="InterPro" id="IPR000966">
    <property type="entry name" value="Metalthion_5"/>
</dbReference>
<dbReference type="Pfam" id="PF02067">
    <property type="entry name" value="Metallothio_5"/>
    <property type="match status" value="1"/>
</dbReference>
<dbReference type="PRINTS" id="PR00872">
    <property type="entry name" value="MTDIPTERA"/>
</dbReference>
<accession>Q9VDN2</accession>
<feature type="chain" id="PRO_0000197356" description="Metallothionein-3">
    <location>
        <begin position="1"/>
        <end position="43"/>
    </location>
</feature>